<organism>
    <name type="scientific">Homo sapiens</name>
    <name type="common">Human</name>
    <dbReference type="NCBI Taxonomy" id="9606"/>
    <lineage>
        <taxon>Eukaryota</taxon>
        <taxon>Metazoa</taxon>
        <taxon>Chordata</taxon>
        <taxon>Craniata</taxon>
        <taxon>Vertebrata</taxon>
        <taxon>Euteleostomi</taxon>
        <taxon>Mammalia</taxon>
        <taxon>Eutheria</taxon>
        <taxon>Euarchontoglires</taxon>
        <taxon>Primates</taxon>
        <taxon>Haplorrhini</taxon>
        <taxon>Catarrhini</taxon>
        <taxon>Hominidae</taxon>
        <taxon>Homo</taxon>
    </lineage>
</organism>
<gene>
    <name evidence="11" type="primary">PAQR8</name>
    <name evidence="11" type="synonym">C6orf33</name>
    <name type="synonym">LMPB1</name>
    <name type="synonym">MPRB</name>
</gene>
<comment type="function">
    <text evidence="1 6 9">Plasma membrane progesterone (P4) receptor coupled to G proteins (PubMed:23763432). Seems to act through a G(i) mediated pathway (PubMed:23763432). May be involved in oocyte maturation (By similarity). Also binds dehydroepiandrosterone (DHEA), pregnanolone, pregnenolone and allopregnanolone (PubMed:23161870).</text>
</comment>
<comment type="interaction">
    <interactant intactId="EBI-12847818">
        <id>Q8TEZ7</id>
    </interactant>
    <interactant intactId="EBI-2339219">
        <id>Q08426</id>
        <label>EHHADH</label>
    </interactant>
    <organismsDiffer>false</organismsDiffer>
    <experiments>3</experiments>
</comment>
<comment type="interaction">
    <interactant intactId="EBI-12847818">
        <id>Q8TEZ7</id>
    </interactant>
    <interactant intactId="EBI-750776">
        <id>O95214</id>
        <label>LEPROTL1</label>
    </interactant>
    <organismsDiffer>false</organismsDiffer>
    <experiments>3</experiments>
</comment>
<comment type="interaction">
    <interactant intactId="EBI-12847818">
        <id>Q8TEZ7</id>
    </interactant>
    <interactant intactId="EBI-711788">
        <id>Q00013</id>
        <label>MPP1</label>
    </interactant>
    <organismsDiffer>false</organismsDiffer>
    <experiments>3</experiments>
</comment>
<comment type="subcellular location">
    <subcellularLocation>
        <location evidence="3 9">Cell membrane</location>
        <topology evidence="2">Multi-pass membrane protein</topology>
    </subcellularLocation>
    <text evidence="3">Colocalizes with a lysosomal protein CTSD/cathepsin D.</text>
</comment>
<comment type="tissue specificity">
    <text evidence="3 4 5 6">Highly expressed in the hypothalamus (PubMed:23161870). Also expressed in spinal cord, kidney and testis.</text>
</comment>
<comment type="miscellaneous">
    <text evidence="9">Non-classical progesterone receptors involved in extranuclear signaling are classified in 2 groups: the class II progestin and adipoQ receptor (PAQR) family (also called mPRs) (PAQR5, PAQR6, PAQR7, PAQR8 and PAQR9) and the b5-like heme/steroid-binding protein family (also called MAPRs) (PGRMC1, PGRMC2, NENF and CYB5D2).</text>
</comment>
<comment type="similarity">
    <text evidence="10">Belongs to the ADIPOR family.</text>
</comment>
<comment type="sequence caution" evidence="10">
    <conflict type="erroneous initiation">
        <sequence resource="EMBL-CDS" id="AAR08374"/>
    </conflict>
</comment>
<evidence type="ECO:0000250" key="1">
    <source>
        <dbReference type="UniProtKB" id="Q80ZE5"/>
    </source>
</evidence>
<evidence type="ECO:0000255" key="2"/>
<evidence type="ECO:0000269" key="3">
    <source>
    </source>
</evidence>
<evidence type="ECO:0000269" key="4">
    <source>
    </source>
</evidence>
<evidence type="ECO:0000269" key="5">
    <source>
    </source>
</evidence>
<evidence type="ECO:0000269" key="6">
    <source>
    </source>
</evidence>
<evidence type="ECO:0000303" key="7">
    <source>
    </source>
</evidence>
<evidence type="ECO:0000303" key="8">
    <source>
    </source>
</evidence>
<evidence type="ECO:0000303" key="9">
    <source>
    </source>
</evidence>
<evidence type="ECO:0000305" key="10"/>
<evidence type="ECO:0000312" key="11">
    <source>
        <dbReference type="HGNC" id="HGNC:15708"/>
    </source>
</evidence>
<feature type="chain" id="PRO_0000218840" description="Membrane progestin receptor beta">
    <location>
        <begin position="1"/>
        <end position="354"/>
    </location>
</feature>
<feature type="topological domain" description="Cytoplasmic" evidence="2">
    <location>
        <begin position="1"/>
        <end position="75"/>
    </location>
</feature>
<feature type="transmembrane region" description="Helical; Name=1" evidence="2">
    <location>
        <begin position="76"/>
        <end position="96"/>
    </location>
</feature>
<feature type="topological domain" description="Extracellular" evidence="2">
    <location>
        <begin position="97"/>
        <end position="111"/>
    </location>
</feature>
<feature type="transmembrane region" description="Helical; Name=2" evidence="2">
    <location>
        <begin position="112"/>
        <end position="132"/>
    </location>
</feature>
<feature type="topological domain" description="Cytoplasmic" evidence="2">
    <location>
        <begin position="133"/>
        <end position="174"/>
    </location>
</feature>
<feature type="transmembrane region" description="Helical; Name=3" evidence="2">
    <location>
        <begin position="175"/>
        <end position="195"/>
    </location>
</feature>
<feature type="topological domain" description="Extracellular" evidence="2">
    <location>
        <begin position="196"/>
        <end position="213"/>
    </location>
</feature>
<feature type="transmembrane region" description="Helical; Name=4" evidence="2">
    <location>
        <begin position="214"/>
        <end position="234"/>
    </location>
</feature>
<feature type="topological domain" description="Cytoplasmic" evidence="2">
    <location>
        <begin position="235"/>
        <end position="243"/>
    </location>
</feature>
<feature type="transmembrane region" description="Helical; Name=5" evidence="2">
    <location>
        <begin position="244"/>
        <end position="264"/>
    </location>
</feature>
<feature type="topological domain" description="Extracellular" evidence="2">
    <location>
        <begin position="265"/>
        <end position="283"/>
    </location>
</feature>
<feature type="transmembrane region" description="Helical; Name=6" evidence="2">
    <location>
        <begin position="284"/>
        <end position="304"/>
    </location>
</feature>
<feature type="topological domain" description="Cytoplasmic" evidence="2">
    <location>
        <begin position="305"/>
        <end position="319"/>
    </location>
</feature>
<feature type="transmembrane region" description="Helical; Name=7" evidence="2">
    <location>
        <begin position="320"/>
        <end position="340"/>
    </location>
</feature>
<feature type="topological domain" description="Extracellular" evidence="2">
    <location>
        <begin position="341"/>
        <end position="354"/>
    </location>
</feature>
<proteinExistence type="evidence at protein level"/>
<keyword id="KW-1003">Cell membrane</keyword>
<keyword id="KW-0217">Developmental protein</keyword>
<keyword id="KW-0221">Differentiation</keyword>
<keyword id="KW-0446">Lipid-binding</keyword>
<keyword id="KW-0472">Membrane</keyword>
<keyword id="KW-0896">Oogenesis</keyword>
<keyword id="KW-1267">Proteomics identification</keyword>
<keyword id="KW-0675">Receptor</keyword>
<keyword id="KW-1185">Reference proteome</keyword>
<keyword id="KW-0754">Steroid-binding</keyword>
<keyword id="KW-0812">Transmembrane</keyword>
<keyword id="KW-1133">Transmembrane helix</keyword>
<accession>Q8TEZ7</accession>
<accession>B2RCF6</accession>
<accession>Q86WL0</accession>
<accession>Q8N6D3</accession>
<accession>Q9HD02</accession>
<sequence>MTTAILERLSTLSVSGQQLRRLPKILEDGLPKMPCTVPETDVPQLFREPYIRTGYRPTGHEWRYYFFSLFQKHNEVVNVWTHLLAALAVLLRFWAFAEAEALPWASTHSLPLLLFILSSITYLTCSLLAHLLQSKSELSHYTFYFVDYVGVSVYQYGSALAHFFYSSDQAWYDRFWLFFLPAAAFCGWLSCAGCCYAKYRYRRPYPVMRKICQVVPAGLAFILDISPVAHRVALCHLAGCQEQAAWYHTLQILFFLVSAYFFSCPVPEKYFPGSCDIVGHGHQIFHAFLSICTLSQLEAILLDYQGRQEIFLQRHGPLSVHMACLSFFFLAACSAATAALLRHKVKARLTKKDS</sequence>
<reference key="1">
    <citation type="journal article" date="2001" name="Biochem. Biophys. Res. Commun.">
        <title>A novel gene in the chromosomal region for juvenile myoclonic epilepsy on 6p12 encodes a brain-specific lysosomal membrane protein.</title>
        <authorList>
            <person name="Suzuki T."/>
            <person name="Ganesh S."/>
            <person name="Agarwala K.L."/>
            <person name="Morita R."/>
            <person name="Sugimoto Y."/>
            <person name="Inazawa J."/>
            <person name="Delgado-Escueta A.V."/>
            <person name="Yamakawa K."/>
        </authorList>
    </citation>
    <scope>NUCLEOTIDE SEQUENCE [MRNA]</scope>
    <scope>TISSUE SPECIFICITY</scope>
    <scope>SUBCELLULAR LOCATION</scope>
    <source>
        <tissue>Brain</tissue>
    </source>
</reference>
<reference key="2">
    <citation type="journal article" date="2005" name="J. Mol. Evol.">
        <title>PAQR proteins: a novel membrane receptor family defined by an ancient 7-transmembrane pass motif.</title>
        <authorList>
            <person name="Tang Y.T."/>
            <person name="Hu T."/>
            <person name="Arterburn M."/>
            <person name="Boyle B."/>
            <person name="Bright J.M."/>
            <person name="Emtage P.C."/>
            <person name="Funk W.D."/>
        </authorList>
    </citation>
    <scope>NUCLEOTIDE SEQUENCE [MRNA]</scope>
    <scope>TISSUE SPECIFICITY</scope>
</reference>
<reference key="3">
    <citation type="journal article" date="2004" name="Nat. Genet.">
        <title>Complete sequencing and characterization of 21,243 full-length human cDNAs.</title>
        <authorList>
            <person name="Ota T."/>
            <person name="Suzuki Y."/>
            <person name="Nishikawa T."/>
            <person name="Otsuki T."/>
            <person name="Sugiyama T."/>
            <person name="Irie R."/>
            <person name="Wakamatsu A."/>
            <person name="Hayashi K."/>
            <person name="Sato H."/>
            <person name="Nagai K."/>
            <person name="Kimura K."/>
            <person name="Makita H."/>
            <person name="Sekine M."/>
            <person name="Obayashi M."/>
            <person name="Nishi T."/>
            <person name="Shibahara T."/>
            <person name="Tanaka T."/>
            <person name="Ishii S."/>
            <person name="Yamamoto J."/>
            <person name="Saito K."/>
            <person name="Kawai Y."/>
            <person name="Isono Y."/>
            <person name="Nakamura Y."/>
            <person name="Nagahari K."/>
            <person name="Murakami K."/>
            <person name="Yasuda T."/>
            <person name="Iwayanagi T."/>
            <person name="Wagatsuma M."/>
            <person name="Shiratori A."/>
            <person name="Sudo H."/>
            <person name="Hosoiri T."/>
            <person name="Kaku Y."/>
            <person name="Kodaira H."/>
            <person name="Kondo H."/>
            <person name="Sugawara M."/>
            <person name="Takahashi M."/>
            <person name="Kanda K."/>
            <person name="Yokoi T."/>
            <person name="Furuya T."/>
            <person name="Kikkawa E."/>
            <person name="Omura Y."/>
            <person name="Abe K."/>
            <person name="Kamihara K."/>
            <person name="Katsuta N."/>
            <person name="Sato K."/>
            <person name="Tanikawa M."/>
            <person name="Yamazaki M."/>
            <person name="Ninomiya K."/>
            <person name="Ishibashi T."/>
            <person name="Yamashita H."/>
            <person name="Murakawa K."/>
            <person name="Fujimori K."/>
            <person name="Tanai H."/>
            <person name="Kimata M."/>
            <person name="Watanabe M."/>
            <person name="Hiraoka S."/>
            <person name="Chiba Y."/>
            <person name="Ishida S."/>
            <person name="Ono Y."/>
            <person name="Takiguchi S."/>
            <person name="Watanabe S."/>
            <person name="Yosida M."/>
            <person name="Hotuta T."/>
            <person name="Kusano J."/>
            <person name="Kanehori K."/>
            <person name="Takahashi-Fujii A."/>
            <person name="Hara H."/>
            <person name="Tanase T.-O."/>
            <person name="Nomura Y."/>
            <person name="Togiya S."/>
            <person name="Komai F."/>
            <person name="Hara R."/>
            <person name="Takeuchi K."/>
            <person name="Arita M."/>
            <person name="Imose N."/>
            <person name="Musashino K."/>
            <person name="Yuuki H."/>
            <person name="Oshima A."/>
            <person name="Sasaki N."/>
            <person name="Aotsuka S."/>
            <person name="Yoshikawa Y."/>
            <person name="Matsunawa H."/>
            <person name="Ichihara T."/>
            <person name="Shiohata N."/>
            <person name="Sano S."/>
            <person name="Moriya S."/>
            <person name="Momiyama H."/>
            <person name="Satoh N."/>
            <person name="Takami S."/>
            <person name="Terashima Y."/>
            <person name="Suzuki O."/>
            <person name="Nakagawa S."/>
            <person name="Senoh A."/>
            <person name="Mizoguchi H."/>
            <person name="Goto Y."/>
            <person name="Shimizu F."/>
            <person name="Wakebe H."/>
            <person name="Hishigaki H."/>
            <person name="Watanabe T."/>
            <person name="Sugiyama A."/>
            <person name="Takemoto M."/>
            <person name="Kawakami B."/>
            <person name="Yamazaki M."/>
            <person name="Watanabe K."/>
            <person name="Kumagai A."/>
            <person name="Itakura S."/>
            <person name="Fukuzumi Y."/>
            <person name="Fujimori Y."/>
            <person name="Komiyama M."/>
            <person name="Tashiro H."/>
            <person name="Tanigami A."/>
            <person name="Fujiwara T."/>
            <person name="Ono T."/>
            <person name="Yamada K."/>
            <person name="Fujii Y."/>
            <person name="Ozaki K."/>
            <person name="Hirao M."/>
            <person name="Ohmori Y."/>
            <person name="Kawabata A."/>
            <person name="Hikiji T."/>
            <person name="Kobatake N."/>
            <person name="Inagaki H."/>
            <person name="Ikema Y."/>
            <person name="Okamoto S."/>
            <person name="Okitani R."/>
            <person name="Kawakami T."/>
            <person name="Noguchi S."/>
            <person name="Itoh T."/>
            <person name="Shigeta K."/>
            <person name="Senba T."/>
            <person name="Matsumura K."/>
            <person name="Nakajima Y."/>
            <person name="Mizuno T."/>
            <person name="Morinaga M."/>
            <person name="Sasaki M."/>
            <person name="Togashi T."/>
            <person name="Oyama M."/>
            <person name="Hata H."/>
            <person name="Watanabe M."/>
            <person name="Komatsu T."/>
            <person name="Mizushima-Sugano J."/>
            <person name="Satoh T."/>
            <person name="Shirai Y."/>
            <person name="Takahashi Y."/>
            <person name="Nakagawa K."/>
            <person name="Okumura K."/>
            <person name="Nagase T."/>
            <person name="Nomura N."/>
            <person name="Kikuchi H."/>
            <person name="Masuho Y."/>
            <person name="Yamashita R."/>
            <person name="Nakai K."/>
            <person name="Yada T."/>
            <person name="Nakamura Y."/>
            <person name="Ohara O."/>
            <person name="Isogai T."/>
            <person name="Sugano S."/>
        </authorList>
    </citation>
    <scope>NUCLEOTIDE SEQUENCE [LARGE SCALE MRNA]</scope>
    <source>
        <tissue>Placenta</tissue>
    </source>
</reference>
<reference key="4">
    <citation type="journal article" date="2003" name="Nature">
        <title>The DNA sequence and analysis of human chromosome 6.</title>
        <authorList>
            <person name="Mungall A.J."/>
            <person name="Palmer S.A."/>
            <person name="Sims S.K."/>
            <person name="Edwards C.A."/>
            <person name="Ashurst J.L."/>
            <person name="Wilming L."/>
            <person name="Jones M.C."/>
            <person name="Horton R."/>
            <person name="Hunt S.E."/>
            <person name="Scott C.E."/>
            <person name="Gilbert J.G.R."/>
            <person name="Clamp M.E."/>
            <person name="Bethel G."/>
            <person name="Milne S."/>
            <person name="Ainscough R."/>
            <person name="Almeida J.P."/>
            <person name="Ambrose K.D."/>
            <person name="Andrews T.D."/>
            <person name="Ashwell R.I.S."/>
            <person name="Babbage A.K."/>
            <person name="Bagguley C.L."/>
            <person name="Bailey J."/>
            <person name="Banerjee R."/>
            <person name="Barker D.J."/>
            <person name="Barlow K.F."/>
            <person name="Bates K."/>
            <person name="Beare D.M."/>
            <person name="Beasley H."/>
            <person name="Beasley O."/>
            <person name="Bird C.P."/>
            <person name="Blakey S.E."/>
            <person name="Bray-Allen S."/>
            <person name="Brook J."/>
            <person name="Brown A.J."/>
            <person name="Brown J.Y."/>
            <person name="Burford D.C."/>
            <person name="Burrill W."/>
            <person name="Burton J."/>
            <person name="Carder C."/>
            <person name="Carter N.P."/>
            <person name="Chapman J.C."/>
            <person name="Clark S.Y."/>
            <person name="Clark G."/>
            <person name="Clee C.M."/>
            <person name="Clegg S."/>
            <person name="Cobley V."/>
            <person name="Collier R.E."/>
            <person name="Collins J.E."/>
            <person name="Colman L.K."/>
            <person name="Corby N.R."/>
            <person name="Coville G.J."/>
            <person name="Culley K.M."/>
            <person name="Dhami P."/>
            <person name="Davies J."/>
            <person name="Dunn M."/>
            <person name="Earthrowl M.E."/>
            <person name="Ellington A.E."/>
            <person name="Evans K.A."/>
            <person name="Faulkner L."/>
            <person name="Francis M.D."/>
            <person name="Frankish A."/>
            <person name="Frankland J."/>
            <person name="French L."/>
            <person name="Garner P."/>
            <person name="Garnett J."/>
            <person name="Ghori M.J."/>
            <person name="Gilby L.M."/>
            <person name="Gillson C.J."/>
            <person name="Glithero R.J."/>
            <person name="Grafham D.V."/>
            <person name="Grant M."/>
            <person name="Gribble S."/>
            <person name="Griffiths C."/>
            <person name="Griffiths M.N.D."/>
            <person name="Hall R."/>
            <person name="Halls K.S."/>
            <person name="Hammond S."/>
            <person name="Harley J.L."/>
            <person name="Hart E.A."/>
            <person name="Heath P.D."/>
            <person name="Heathcott R."/>
            <person name="Holmes S.J."/>
            <person name="Howden P.J."/>
            <person name="Howe K.L."/>
            <person name="Howell G.R."/>
            <person name="Huckle E."/>
            <person name="Humphray S.J."/>
            <person name="Humphries M.D."/>
            <person name="Hunt A.R."/>
            <person name="Johnson C.M."/>
            <person name="Joy A.A."/>
            <person name="Kay M."/>
            <person name="Keenan S.J."/>
            <person name="Kimberley A.M."/>
            <person name="King A."/>
            <person name="Laird G.K."/>
            <person name="Langford C."/>
            <person name="Lawlor S."/>
            <person name="Leongamornlert D.A."/>
            <person name="Leversha M."/>
            <person name="Lloyd C.R."/>
            <person name="Lloyd D.M."/>
            <person name="Loveland J.E."/>
            <person name="Lovell J."/>
            <person name="Martin S."/>
            <person name="Mashreghi-Mohammadi M."/>
            <person name="Maslen G.L."/>
            <person name="Matthews L."/>
            <person name="McCann O.T."/>
            <person name="McLaren S.J."/>
            <person name="McLay K."/>
            <person name="McMurray A."/>
            <person name="Moore M.J.F."/>
            <person name="Mullikin J.C."/>
            <person name="Niblett D."/>
            <person name="Nickerson T."/>
            <person name="Novik K.L."/>
            <person name="Oliver K."/>
            <person name="Overton-Larty E.K."/>
            <person name="Parker A."/>
            <person name="Patel R."/>
            <person name="Pearce A.V."/>
            <person name="Peck A.I."/>
            <person name="Phillimore B.J.C.T."/>
            <person name="Phillips S."/>
            <person name="Plumb R.W."/>
            <person name="Porter K.M."/>
            <person name="Ramsey Y."/>
            <person name="Ranby S.A."/>
            <person name="Rice C.M."/>
            <person name="Ross M.T."/>
            <person name="Searle S.M."/>
            <person name="Sehra H.K."/>
            <person name="Sheridan E."/>
            <person name="Skuce C.D."/>
            <person name="Smith S."/>
            <person name="Smith M."/>
            <person name="Spraggon L."/>
            <person name="Squares S.L."/>
            <person name="Steward C.A."/>
            <person name="Sycamore N."/>
            <person name="Tamlyn-Hall G."/>
            <person name="Tester J."/>
            <person name="Theaker A.J."/>
            <person name="Thomas D.W."/>
            <person name="Thorpe A."/>
            <person name="Tracey A."/>
            <person name="Tromans A."/>
            <person name="Tubby B."/>
            <person name="Wall M."/>
            <person name="Wallis J.M."/>
            <person name="West A.P."/>
            <person name="White S.S."/>
            <person name="Whitehead S.L."/>
            <person name="Whittaker H."/>
            <person name="Wild A."/>
            <person name="Willey D.J."/>
            <person name="Wilmer T.E."/>
            <person name="Wood J.M."/>
            <person name="Wray P.W."/>
            <person name="Wyatt J.C."/>
            <person name="Young L."/>
            <person name="Younger R.M."/>
            <person name="Bentley D.R."/>
            <person name="Coulson A."/>
            <person name="Durbin R.M."/>
            <person name="Hubbard T."/>
            <person name="Sulston J.E."/>
            <person name="Dunham I."/>
            <person name="Rogers J."/>
            <person name="Beck S."/>
        </authorList>
    </citation>
    <scope>NUCLEOTIDE SEQUENCE [LARGE SCALE GENOMIC DNA]</scope>
</reference>
<reference key="5">
    <citation type="journal article" date="2004" name="Genome Res.">
        <title>The status, quality, and expansion of the NIH full-length cDNA project: the Mammalian Gene Collection (MGC).</title>
        <authorList>
            <consortium name="The MGC Project Team"/>
        </authorList>
    </citation>
    <scope>NUCLEOTIDE SEQUENCE [LARGE SCALE MRNA]</scope>
    <source>
        <tissue>Brain</tissue>
    </source>
</reference>
<reference key="6">
    <citation type="journal article" date="2003" name="Proc. Natl. Acad. Sci. U.S.A.">
        <title>Identification, classification, and partial characterization of genes in humans and other vertebrates homologous to a fish membrane progestin receptor.</title>
        <authorList>
            <person name="Zhu Y."/>
            <person name="Bond J."/>
            <person name="Thomas P."/>
        </authorList>
    </citation>
    <scope>NUCLEOTIDE SEQUENCE [MRNA] OF 133-354</scope>
    <scope>TISSUE SPECIFICITY</scope>
    <source>
        <tissue>Brain</tissue>
    </source>
</reference>
<reference key="7">
    <citation type="journal article" date="2003" name="Proc. Natl. Acad. Sci. U.S.A.">
        <title>The further redefining of steroid-mediated signaling.</title>
        <authorList>
            <person name="Hammes S.R."/>
        </authorList>
    </citation>
    <scope>REVIEW</scope>
</reference>
<reference key="8">
    <citation type="journal article" date="2013" name="J. Neuroendocrinol.">
        <title>Nonclassical progesterone signalling molecules in the nervous system.</title>
        <authorList>
            <person name="Petersen S.L."/>
            <person name="Intlekofer K.A."/>
            <person name="Moura-Conlon P.J."/>
            <person name="Brewer D.N."/>
            <person name="Del Pino Sans J."/>
            <person name="Lopez J.A."/>
        </authorList>
    </citation>
    <scope>FUNCTION</scope>
    <scope>REVIEW</scope>
    <scope>SUBCELLULAR LOCATION</scope>
</reference>
<reference key="9">
    <citation type="journal article" date="2013" name="Endocrinology">
        <title>Characterization, neurosteroid binding and brain distribution of human membrane progesterone receptors delta and {epsilon} (mPRdelta and mPR{epsilon}) and mPRdelta involvement in neurosteroid inhibition of apoptosis.</title>
        <authorList>
            <person name="Pang Y."/>
            <person name="Dong J."/>
            <person name="Thomas P."/>
        </authorList>
    </citation>
    <scope>FUNCTION</scope>
    <scope>TISSUE SPECIFICITY</scope>
</reference>
<protein>
    <recommendedName>
        <fullName evidence="9">Membrane progestin receptor beta</fullName>
        <shortName evidence="9">mPR beta</shortName>
    </recommendedName>
    <alternativeName>
        <fullName evidence="7">Lysosomal membrane protein in brain 1</fullName>
    </alternativeName>
    <alternativeName>
        <fullName evidence="9">Membrane progesterone P4 receptor beta</fullName>
    </alternativeName>
    <alternativeName>
        <fullName evidence="9">Membrane progesterone receptor beta</fullName>
    </alternativeName>
    <alternativeName>
        <fullName>Progesterone and adipoQ receptor family member 8</fullName>
    </alternativeName>
    <alternativeName>
        <fullName evidence="8">Progestin and adipoQ receptor family member 8</fullName>
    </alternativeName>
    <alternativeName>
        <fullName>Progestin and adipoQ receptor family member VIII</fullName>
    </alternativeName>
</protein>
<dbReference type="EMBL" id="AF347029">
    <property type="protein sequence ID" value="AAL79777.2"/>
    <property type="molecule type" value="mRNA"/>
</dbReference>
<dbReference type="EMBL" id="AY424286">
    <property type="protein sequence ID" value="AAR08374.1"/>
    <property type="status" value="ALT_INIT"/>
    <property type="molecule type" value="mRNA"/>
</dbReference>
<dbReference type="EMBL" id="AK315088">
    <property type="protein sequence ID" value="BAG37553.1"/>
    <property type="molecule type" value="mRNA"/>
</dbReference>
<dbReference type="EMBL" id="AL136125">
    <property type="status" value="NOT_ANNOTATED_CDS"/>
    <property type="molecule type" value="Genomic_DNA"/>
</dbReference>
<dbReference type="EMBL" id="BC030664">
    <property type="protein sequence ID" value="AAH30664.2"/>
    <property type="molecule type" value="mRNA"/>
</dbReference>
<dbReference type="EMBL" id="AF313619">
    <property type="protein sequence ID" value="AAO47232.1"/>
    <property type="molecule type" value="mRNA"/>
</dbReference>
<dbReference type="CCDS" id="CCDS4941.1"/>
<dbReference type="RefSeq" id="NP_588608.1">
    <property type="nucleotide sequence ID" value="NM_133367.5"/>
</dbReference>
<dbReference type="SMR" id="Q8TEZ7"/>
<dbReference type="BioGRID" id="124469">
    <property type="interactions" value="3"/>
</dbReference>
<dbReference type="FunCoup" id="Q8TEZ7">
    <property type="interactions" value="910"/>
</dbReference>
<dbReference type="IntAct" id="Q8TEZ7">
    <property type="interactions" value="3"/>
</dbReference>
<dbReference type="STRING" id="9606.ENSP00000406197"/>
<dbReference type="TCDB" id="1.C.113.1.12">
    <property type="family name" value="the hemolysin iii (hly iii) family"/>
</dbReference>
<dbReference type="iPTMnet" id="Q8TEZ7"/>
<dbReference type="PhosphoSitePlus" id="Q8TEZ7"/>
<dbReference type="BioMuta" id="PAQR8"/>
<dbReference type="DMDM" id="51316493"/>
<dbReference type="jPOST" id="Q8TEZ7"/>
<dbReference type="MassIVE" id="Q8TEZ7"/>
<dbReference type="PaxDb" id="9606-ENSP00000406197"/>
<dbReference type="PeptideAtlas" id="Q8TEZ7"/>
<dbReference type="ProteomicsDB" id="74529"/>
<dbReference type="Antibodypedia" id="30905">
    <property type="antibodies" value="108 antibodies from 22 providers"/>
</dbReference>
<dbReference type="DNASU" id="85315"/>
<dbReference type="Ensembl" id="ENST00000360726.3">
    <property type="protein sequence ID" value="ENSP00000353953.3"/>
    <property type="gene ID" value="ENSG00000170915.9"/>
</dbReference>
<dbReference type="Ensembl" id="ENST00000442253.3">
    <property type="protein sequence ID" value="ENSP00000406197.2"/>
    <property type="gene ID" value="ENSG00000170915.9"/>
</dbReference>
<dbReference type="GeneID" id="85315"/>
<dbReference type="KEGG" id="hsa:85315"/>
<dbReference type="MANE-Select" id="ENST00000442253.3">
    <property type="protein sequence ID" value="ENSP00000406197.2"/>
    <property type="RefSeq nucleotide sequence ID" value="NM_133367.5"/>
    <property type="RefSeq protein sequence ID" value="NP_588608.1"/>
</dbReference>
<dbReference type="UCSC" id="uc003pao.4">
    <property type="organism name" value="human"/>
</dbReference>
<dbReference type="AGR" id="HGNC:15708"/>
<dbReference type="CTD" id="85315"/>
<dbReference type="DisGeNET" id="85315"/>
<dbReference type="GeneCards" id="PAQR8"/>
<dbReference type="HGNC" id="HGNC:15708">
    <property type="gene designation" value="PAQR8"/>
</dbReference>
<dbReference type="HPA" id="ENSG00000170915">
    <property type="expression patterns" value="Tissue enhanced (brain)"/>
</dbReference>
<dbReference type="MIM" id="607780">
    <property type="type" value="gene"/>
</dbReference>
<dbReference type="neXtProt" id="NX_Q8TEZ7"/>
<dbReference type="OpenTargets" id="ENSG00000170915"/>
<dbReference type="PharmGKB" id="PA25934"/>
<dbReference type="VEuPathDB" id="HostDB:ENSG00000170915"/>
<dbReference type="eggNOG" id="KOG0748">
    <property type="taxonomic scope" value="Eukaryota"/>
</dbReference>
<dbReference type="GeneTree" id="ENSGT00940000159860"/>
<dbReference type="HOGENOM" id="CLU_052356_0_0_1"/>
<dbReference type="InParanoid" id="Q8TEZ7"/>
<dbReference type="OMA" id="QYGCSLG"/>
<dbReference type="OrthoDB" id="535992at2759"/>
<dbReference type="PAN-GO" id="Q8TEZ7">
    <property type="GO annotations" value="4 GO annotations based on evolutionary models"/>
</dbReference>
<dbReference type="PhylomeDB" id="Q8TEZ7"/>
<dbReference type="TreeFam" id="TF319738"/>
<dbReference type="PathwayCommons" id="Q8TEZ7"/>
<dbReference type="SignaLink" id="Q8TEZ7"/>
<dbReference type="BioGRID-ORCS" id="85315">
    <property type="hits" value="18 hits in 1149 CRISPR screens"/>
</dbReference>
<dbReference type="ChiTaRS" id="PAQR8">
    <property type="organism name" value="human"/>
</dbReference>
<dbReference type="GeneWiki" id="PAQR8"/>
<dbReference type="GenomeRNAi" id="85315"/>
<dbReference type="Pharos" id="Q8TEZ7">
    <property type="development level" value="Tbio"/>
</dbReference>
<dbReference type="PRO" id="PR:Q8TEZ7"/>
<dbReference type="Proteomes" id="UP000005640">
    <property type="component" value="Chromosome 6"/>
</dbReference>
<dbReference type="RNAct" id="Q8TEZ7">
    <property type="molecule type" value="protein"/>
</dbReference>
<dbReference type="Bgee" id="ENSG00000170915">
    <property type="expression patterns" value="Expressed in inferior vagus X ganglion and 177 other cell types or tissues"/>
</dbReference>
<dbReference type="ExpressionAtlas" id="Q8TEZ7">
    <property type="expression patterns" value="baseline and differential"/>
</dbReference>
<dbReference type="GO" id="GO:0005794">
    <property type="term" value="C:Golgi apparatus"/>
    <property type="evidence" value="ECO:0000314"/>
    <property type="project" value="HPA"/>
</dbReference>
<dbReference type="GO" id="GO:0005886">
    <property type="term" value="C:plasma membrane"/>
    <property type="evidence" value="ECO:0000314"/>
    <property type="project" value="HPA"/>
</dbReference>
<dbReference type="GO" id="GO:0003707">
    <property type="term" value="F:nuclear steroid receptor activity"/>
    <property type="evidence" value="ECO:0000318"/>
    <property type="project" value="GO_Central"/>
</dbReference>
<dbReference type="GO" id="GO:0005496">
    <property type="term" value="F:steroid binding"/>
    <property type="evidence" value="ECO:0000318"/>
    <property type="project" value="GO_Central"/>
</dbReference>
<dbReference type="GO" id="GO:0048477">
    <property type="term" value="P:oogenesis"/>
    <property type="evidence" value="ECO:0007669"/>
    <property type="project" value="UniProtKB-KW"/>
</dbReference>
<dbReference type="GO" id="GO:0048545">
    <property type="term" value="P:response to steroid hormone"/>
    <property type="evidence" value="ECO:0000318"/>
    <property type="project" value="GO_Central"/>
</dbReference>
<dbReference type="InterPro" id="IPR004254">
    <property type="entry name" value="AdipoR/HlyIII-related"/>
</dbReference>
<dbReference type="PANTHER" id="PTHR20855">
    <property type="entry name" value="ADIPOR/PROGESTIN RECEPTOR-RELATED"/>
    <property type="match status" value="1"/>
</dbReference>
<dbReference type="PANTHER" id="PTHR20855:SF22">
    <property type="entry name" value="MEMBRANE PROGESTIN RECEPTOR BETA"/>
    <property type="match status" value="1"/>
</dbReference>
<dbReference type="Pfam" id="PF03006">
    <property type="entry name" value="HlyIII"/>
    <property type="match status" value="1"/>
</dbReference>
<name>PAQR8_HUMAN</name>